<gene>
    <name evidence="1" type="primary">rpoY</name>
    <name type="ordered locus">SPH_0238</name>
</gene>
<feature type="chain" id="PRO_1000199623" description="DNA-directed RNA polymerase subunit epsilon">
    <location>
        <begin position="1"/>
        <end position="77"/>
    </location>
</feature>
<reference key="1">
    <citation type="journal article" date="2010" name="Genome Biol.">
        <title>Structure and dynamics of the pan-genome of Streptococcus pneumoniae and closely related species.</title>
        <authorList>
            <person name="Donati C."/>
            <person name="Hiller N.L."/>
            <person name="Tettelin H."/>
            <person name="Muzzi A."/>
            <person name="Croucher N.J."/>
            <person name="Angiuoli S.V."/>
            <person name="Oggioni M."/>
            <person name="Dunning Hotopp J.C."/>
            <person name="Hu F.Z."/>
            <person name="Riley D.R."/>
            <person name="Covacci A."/>
            <person name="Mitchell T.J."/>
            <person name="Bentley S.D."/>
            <person name="Kilian M."/>
            <person name="Ehrlich G.D."/>
            <person name="Rappuoli R."/>
            <person name="Moxon E.R."/>
            <person name="Masignani V."/>
        </authorList>
    </citation>
    <scope>NUCLEOTIDE SEQUENCE [LARGE SCALE GENOMIC DNA]</scope>
    <source>
        <strain>Hungary19A-6</strain>
    </source>
</reference>
<sequence length="77" mass="9288">MIYKVFYQETKERSPRRETTRALYLDIDTSSELEGRITARQLVEENRPEYNIEYIELLSDKLLDYEKETGAFEITEF</sequence>
<name>RPOY_STRPI</name>
<keyword id="KW-0240">DNA-directed RNA polymerase</keyword>
<keyword id="KW-0548">Nucleotidyltransferase</keyword>
<keyword id="KW-0804">Transcription</keyword>
<keyword id="KW-0808">Transferase</keyword>
<evidence type="ECO:0000255" key="1">
    <source>
        <dbReference type="HAMAP-Rule" id="MF_01553"/>
    </source>
</evidence>
<dbReference type="EC" id="2.7.7.6" evidence="1"/>
<dbReference type="EMBL" id="CP000936">
    <property type="protein sequence ID" value="ACA37173.1"/>
    <property type="molecule type" value="Genomic_DNA"/>
</dbReference>
<dbReference type="RefSeq" id="WP_000639579.1">
    <property type="nucleotide sequence ID" value="NC_010380.1"/>
</dbReference>
<dbReference type="SMR" id="B1I837"/>
<dbReference type="KEGG" id="spv:SPH_0238"/>
<dbReference type="HOGENOM" id="CLU_187518_0_0_9"/>
<dbReference type="Proteomes" id="UP000002163">
    <property type="component" value="Chromosome"/>
</dbReference>
<dbReference type="GO" id="GO:0000428">
    <property type="term" value="C:DNA-directed RNA polymerase complex"/>
    <property type="evidence" value="ECO:0007669"/>
    <property type="project" value="UniProtKB-KW"/>
</dbReference>
<dbReference type="GO" id="GO:0003677">
    <property type="term" value="F:DNA binding"/>
    <property type="evidence" value="ECO:0007669"/>
    <property type="project" value="UniProtKB-UniRule"/>
</dbReference>
<dbReference type="GO" id="GO:0003899">
    <property type="term" value="F:DNA-directed RNA polymerase activity"/>
    <property type="evidence" value="ECO:0007669"/>
    <property type="project" value="UniProtKB-UniRule"/>
</dbReference>
<dbReference type="GO" id="GO:0006351">
    <property type="term" value="P:DNA-templated transcription"/>
    <property type="evidence" value="ECO:0007669"/>
    <property type="project" value="UniProtKB-UniRule"/>
</dbReference>
<dbReference type="Gene3D" id="3.10.20.730">
    <property type="entry name" value="RNAP, epsilon subunit-like"/>
    <property type="match status" value="1"/>
</dbReference>
<dbReference type="HAMAP" id="MF_01553">
    <property type="entry name" value="RNApol_bact_RpoY"/>
    <property type="match status" value="1"/>
</dbReference>
<dbReference type="InterPro" id="IPR009907">
    <property type="entry name" value="RpoY"/>
</dbReference>
<dbReference type="NCBIfam" id="NF010188">
    <property type="entry name" value="PRK13667.1"/>
    <property type="match status" value="1"/>
</dbReference>
<dbReference type="Pfam" id="PF07288">
    <property type="entry name" value="RpoY"/>
    <property type="match status" value="1"/>
</dbReference>
<accession>B1I837</accession>
<proteinExistence type="inferred from homology"/>
<comment type="function">
    <text evidence="1">A non-essential component of RNA polymerase (RNAP).</text>
</comment>
<comment type="catalytic activity">
    <reaction evidence="1">
        <text>RNA(n) + a ribonucleoside 5'-triphosphate = RNA(n+1) + diphosphate</text>
        <dbReference type="Rhea" id="RHEA:21248"/>
        <dbReference type="Rhea" id="RHEA-COMP:14527"/>
        <dbReference type="Rhea" id="RHEA-COMP:17342"/>
        <dbReference type="ChEBI" id="CHEBI:33019"/>
        <dbReference type="ChEBI" id="CHEBI:61557"/>
        <dbReference type="ChEBI" id="CHEBI:140395"/>
        <dbReference type="EC" id="2.7.7.6"/>
    </reaction>
</comment>
<comment type="subunit">
    <text evidence="1">RNAP is composed of a core of 2 alpha, a beta and a beta' subunit. The core is associated with a delta subunit, and at least one of epsilon or omega. When a sigma factor is associated with the core the holoenzyme is formed, which can initiate transcription.</text>
</comment>
<comment type="similarity">
    <text evidence="1">Belongs to the RNA polymerase subunit epsilon family.</text>
</comment>
<protein>
    <recommendedName>
        <fullName evidence="1">DNA-directed RNA polymerase subunit epsilon</fullName>
        <shortName evidence="1">RNAP epsilon subunit</shortName>
        <ecNumber evidence="1">2.7.7.6</ecNumber>
    </recommendedName>
    <alternativeName>
        <fullName evidence="1">RNA polymerase epsilon subunit</fullName>
    </alternativeName>
    <alternativeName>
        <fullName evidence="1">Transcriptase subunit epsilon</fullName>
    </alternativeName>
</protein>
<organism>
    <name type="scientific">Streptococcus pneumoniae (strain Hungary19A-6)</name>
    <dbReference type="NCBI Taxonomy" id="487214"/>
    <lineage>
        <taxon>Bacteria</taxon>
        <taxon>Bacillati</taxon>
        <taxon>Bacillota</taxon>
        <taxon>Bacilli</taxon>
        <taxon>Lactobacillales</taxon>
        <taxon>Streptococcaceae</taxon>
        <taxon>Streptococcus</taxon>
    </lineage>
</organism>